<accession>A1E9X8</accession>
<organism>
    <name type="scientific">Sorghum bicolor</name>
    <name type="common">Sorghum</name>
    <name type="synonym">Sorghum vulgare</name>
    <dbReference type="NCBI Taxonomy" id="4558"/>
    <lineage>
        <taxon>Eukaryota</taxon>
        <taxon>Viridiplantae</taxon>
        <taxon>Streptophyta</taxon>
        <taxon>Embryophyta</taxon>
        <taxon>Tracheophyta</taxon>
        <taxon>Spermatophyta</taxon>
        <taxon>Magnoliopsida</taxon>
        <taxon>Liliopsida</taxon>
        <taxon>Poales</taxon>
        <taxon>Poaceae</taxon>
        <taxon>PACMAD clade</taxon>
        <taxon>Panicoideae</taxon>
        <taxon>Andropogonodae</taxon>
        <taxon>Andropogoneae</taxon>
        <taxon>Sorghinae</taxon>
        <taxon>Sorghum</taxon>
    </lineage>
</organism>
<name>NDHI_SORBI</name>
<keyword id="KW-0004">4Fe-4S</keyword>
<keyword id="KW-0150">Chloroplast</keyword>
<keyword id="KW-0408">Iron</keyword>
<keyword id="KW-0411">Iron-sulfur</keyword>
<keyword id="KW-0472">Membrane</keyword>
<keyword id="KW-0479">Metal-binding</keyword>
<keyword id="KW-0520">NAD</keyword>
<keyword id="KW-0521">NADP</keyword>
<keyword id="KW-0934">Plastid</keyword>
<keyword id="KW-0618">Plastoquinone</keyword>
<keyword id="KW-0874">Quinone</keyword>
<keyword id="KW-1185">Reference proteome</keyword>
<keyword id="KW-0677">Repeat</keyword>
<keyword id="KW-0793">Thylakoid</keyword>
<keyword id="KW-1278">Translocase</keyword>
<geneLocation type="chloroplast"/>
<reference key="1">
    <citation type="journal article" date="2007" name="Theor. Appl. Genet.">
        <title>Complete chloroplast genome sequences of Hordeum vulgare, Sorghum bicolor and Agrostis stolonifera, and comparative analyses with other grass genomes.</title>
        <authorList>
            <person name="Saski C."/>
            <person name="Lee S.-B."/>
            <person name="Fjellheim S."/>
            <person name="Guda C."/>
            <person name="Jansen R.K."/>
            <person name="Luo H."/>
            <person name="Tomkins J."/>
            <person name="Rognli O.A."/>
            <person name="Daniell H."/>
            <person name="Clarke J.L."/>
        </authorList>
    </citation>
    <scope>NUCLEOTIDE SEQUENCE [LARGE SCALE GENOMIC DNA]</scope>
    <source>
        <strain>cv. BTx623</strain>
    </source>
</reference>
<sequence length="180" mass="21065">MFPMLTGFISYGQQTIRAARYIGQGLIITLSHTNRLPITIHYPYEKSITSERFRGRIHFEFDKCIACEVCVRVCPIDLPLVDWKFEKDIKRKQLLNYSIDFGVCIFCGNCVEYCPTNCLSMTEEYELSTYDRHELNYNQIALSRLPISIMGDYTIQTIRNSPQSKIDEEKSWNSRTITDY</sequence>
<protein>
    <recommendedName>
        <fullName evidence="1">NAD(P)H-quinone oxidoreductase subunit I, chloroplastic</fullName>
        <ecNumber evidence="1">7.1.1.-</ecNumber>
    </recommendedName>
    <alternativeName>
        <fullName evidence="1">NAD(P)H dehydrogenase subunit I</fullName>
        <shortName evidence="1">NDH subunit I</shortName>
    </alternativeName>
    <alternativeName>
        <fullName evidence="1">NADH-plastoquinone oxidoreductase subunit I</fullName>
    </alternativeName>
</protein>
<proteinExistence type="inferred from homology"/>
<gene>
    <name evidence="1" type="primary">ndhI</name>
</gene>
<evidence type="ECO:0000255" key="1">
    <source>
        <dbReference type="HAMAP-Rule" id="MF_01351"/>
    </source>
</evidence>
<feature type="chain" id="PRO_0000275480" description="NAD(P)H-quinone oxidoreductase subunit I, chloroplastic">
    <location>
        <begin position="1"/>
        <end position="180"/>
    </location>
</feature>
<feature type="domain" description="4Fe-4S ferredoxin-type 1" evidence="1">
    <location>
        <begin position="55"/>
        <end position="84"/>
    </location>
</feature>
<feature type="domain" description="4Fe-4S ferredoxin-type 2" evidence="1">
    <location>
        <begin position="95"/>
        <end position="124"/>
    </location>
</feature>
<feature type="binding site" evidence="1">
    <location>
        <position position="64"/>
    </location>
    <ligand>
        <name>[4Fe-4S] cluster</name>
        <dbReference type="ChEBI" id="CHEBI:49883"/>
        <label>1</label>
    </ligand>
</feature>
<feature type="binding site" evidence="1">
    <location>
        <position position="67"/>
    </location>
    <ligand>
        <name>[4Fe-4S] cluster</name>
        <dbReference type="ChEBI" id="CHEBI:49883"/>
        <label>1</label>
    </ligand>
</feature>
<feature type="binding site" evidence="1">
    <location>
        <position position="70"/>
    </location>
    <ligand>
        <name>[4Fe-4S] cluster</name>
        <dbReference type="ChEBI" id="CHEBI:49883"/>
        <label>1</label>
    </ligand>
</feature>
<feature type="binding site" evidence="1">
    <location>
        <position position="74"/>
    </location>
    <ligand>
        <name>[4Fe-4S] cluster</name>
        <dbReference type="ChEBI" id="CHEBI:49883"/>
        <label>2</label>
    </ligand>
</feature>
<feature type="binding site" evidence="1">
    <location>
        <position position="104"/>
    </location>
    <ligand>
        <name>[4Fe-4S] cluster</name>
        <dbReference type="ChEBI" id="CHEBI:49883"/>
        <label>2</label>
    </ligand>
</feature>
<feature type="binding site" evidence="1">
    <location>
        <position position="107"/>
    </location>
    <ligand>
        <name>[4Fe-4S] cluster</name>
        <dbReference type="ChEBI" id="CHEBI:49883"/>
        <label>2</label>
    </ligand>
</feature>
<feature type="binding site" evidence="1">
    <location>
        <position position="110"/>
    </location>
    <ligand>
        <name>[4Fe-4S] cluster</name>
        <dbReference type="ChEBI" id="CHEBI:49883"/>
        <label>2</label>
    </ligand>
</feature>
<feature type="binding site" evidence="1">
    <location>
        <position position="114"/>
    </location>
    <ligand>
        <name>[4Fe-4S] cluster</name>
        <dbReference type="ChEBI" id="CHEBI:49883"/>
        <label>1</label>
    </ligand>
</feature>
<comment type="function">
    <text evidence="1">NDH shuttles electrons from NAD(P)H:plastoquinone, via FMN and iron-sulfur (Fe-S) centers, to quinones in the photosynthetic chain and possibly in a chloroplast respiratory chain. The immediate electron acceptor for the enzyme in this species is believed to be plastoquinone. Couples the redox reaction to proton translocation, and thus conserves the redox energy in a proton gradient.</text>
</comment>
<comment type="catalytic activity">
    <reaction evidence="1">
        <text>a plastoquinone + NADH + (n+1) H(+)(in) = a plastoquinol + NAD(+) + n H(+)(out)</text>
        <dbReference type="Rhea" id="RHEA:42608"/>
        <dbReference type="Rhea" id="RHEA-COMP:9561"/>
        <dbReference type="Rhea" id="RHEA-COMP:9562"/>
        <dbReference type="ChEBI" id="CHEBI:15378"/>
        <dbReference type="ChEBI" id="CHEBI:17757"/>
        <dbReference type="ChEBI" id="CHEBI:57540"/>
        <dbReference type="ChEBI" id="CHEBI:57945"/>
        <dbReference type="ChEBI" id="CHEBI:62192"/>
    </reaction>
</comment>
<comment type="catalytic activity">
    <reaction evidence="1">
        <text>a plastoquinone + NADPH + (n+1) H(+)(in) = a plastoquinol + NADP(+) + n H(+)(out)</text>
        <dbReference type="Rhea" id="RHEA:42612"/>
        <dbReference type="Rhea" id="RHEA-COMP:9561"/>
        <dbReference type="Rhea" id="RHEA-COMP:9562"/>
        <dbReference type="ChEBI" id="CHEBI:15378"/>
        <dbReference type="ChEBI" id="CHEBI:17757"/>
        <dbReference type="ChEBI" id="CHEBI:57783"/>
        <dbReference type="ChEBI" id="CHEBI:58349"/>
        <dbReference type="ChEBI" id="CHEBI:62192"/>
    </reaction>
</comment>
<comment type="cofactor">
    <cofactor evidence="1">
        <name>[4Fe-4S] cluster</name>
        <dbReference type="ChEBI" id="CHEBI:49883"/>
    </cofactor>
    <text evidence="1">Binds 2 [4Fe-4S] clusters per subunit.</text>
</comment>
<comment type="subunit">
    <text evidence="1">NDH is composed of at least 16 different subunits, 5 of which are encoded in the nucleus.</text>
</comment>
<comment type="subcellular location">
    <subcellularLocation>
        <location evidence="1">Plastid</location>
        <location evidence="1">Chloroplast thylakoid membrane</location>
        <topology evidence="1">Peripheral membrane protein</topology>
    </subcellularLocation>
</comment>
<comment type="similarity">
    <text evidence="1">Belongs to the complex I 23 kDa subunit family.</text>
</comment>
<dbReference type="EC" id="7.1.1.-" evidence="1"/>
<dbReference type="EMBL" id="EF115542">
    <property type="protein sequence ID" value="ABK79550.1"/>
    <property type="molecule type" value="Genomic_DNA"/>
</dbReference>
<dbReference type="RefSeq" id="YP_899461.1">
    <property type="nucleotide sequence ID" value="NC_008602.1"/>
</dbReference>
<dbReference type="SMR" id="A1E9X8"/>
<dbReference type="FunCoup" id="A1E9X8">
    <property type="interactions" value="153"/>
</dbReference>
<dbReference type="STRING" id="4558.A1E9X8"/>
<dbReference type="GeneID" id="4549156"/>
<dbReference type="KEGG" id="sbi:4549156"/>
<dbReference type="InParanoid" id="A1E9X8"/>
<dbReference type="OrthoDB" id="590178at2759"/>
<dbReference type="Proteomes" id="UP000000768">
    <property type="component" value="Chloroplast"/>
</dbReference>
<dbReference type="ExpressionAtlas" id="A1E9X8">
    <property type="expression patterns" value="baseline"/>
</dbReference>
<dbReference type="GO" id="GO:0009535">
    <property type="term" value="C:chloroplast thylakoid membrane"/>
    <property type="evidence" value="ECO:0007669"/>
    <property type="project" value="UniProtKB-SubCell"/>
</dbReference>
<dbReference type="GO" id="GO:0051539">
    <property type="term" value="F:4 iron, 4 sulfur cluster binding"/>
    <property type="evidence" value="ECO:0007669"/>
    <property type="project" value="UniProtKB-KW"/>
</dbReference>
<dbReference type="GO" id="GO:0005506">
    <property type="term" value="F:iron ion binding"/>
    <property type="evidence" value="ECO:0007669"/>
    <property type="project" value="UniProtKB-UniRule"/>
</dbReference>
<dbReference type="GO" id="GO:0008137">
    <property type="term" value="F:NADH dehydrogenase (ubiquinone) activity"/>
    <property type="evidence" value="ECO:0007669"/>
    <property type="project" value="InterPro"/>
</dbReference>
<dbReference type="GO" id="GO:0048038">
    <property type="term" value="F:quinone binding"/>
    <property type="evidence" value="ECO:0007669"/>
    <property type="project" value="UniProtKB-KW"/>
</dbReference>
<dbReference type="GO" id="GO:0019684">
    <property type="term" value="P:photosynthesis, light reaction"/>
    <property type="evidence" value="ECO:0007669"/>
    <property type="project" value="UniProtKB-UniRule"/>
</dbReference>
<dbReference type="Gene3D" id="3.30.70.3270">
    <property type="match status" value="1"/>
</dbReference>
<dbReference type="HAMAP" id="MF_01351">
    <property type="entry name" value="NDH1_NuoI"/>
    <property type="match status" value="1"/>
</dbReference>
<dbReference type="InterPro" id="IPR017896">
    <property type="entry name" value="4Fe4S_Fe-S-bd"/>
</dbReference>
<dbReference type="InterPro" id="IPR017900">
    <property type="entry name" value="4Fe4S_Fe_S_CS"/>
</dbReference>
<dbReference type="InterPro" id="IPR010226">
    <property type="entry name" value="NADH_quinone_OxRdtase_chainI"/>
</dbReference>
<dbReference type="InterPro" id="IPR004497">
    <property type="entry name" value="NDHI"/>
</dbReference>
<dbReference type="NCBIfam" id="TIGR00403">
    <property type="entry name" value="ndhI"/>
    <property type="match status" value="1"/>
</dbReference>
<dbReference type="NCBIfam" id="TIGR01971">
    <property type="entry name" value="NuoI"/>
    <property type="match status" value="1"/>
</dbReference>
<dbReference type="NCBIfam" id="NF004537">
    <property type="entry name" value="PRK05888.1-3"/>
    <property type="match status" value="1"/>
</dbReference>
<dbReference type="PANTHER" id="PTHR47275">
    <property type="entry name" value="NAD(P)H-QUINONE OXIDOREDUCTASE SUBUNIT I, CHLOROPLASTIC"/>
    <property type="match status" value="1"/>
</dbReference>
<dbReference type="PANTHER" id="PTHR47275:SF3">
    <property type="entry name" value="NAD(P)H-QUINONE OXIDOREDUCTASE SUBUNIT I, CHLOROPLASTIC"/>
    <property type="match status" value="1"/>
</dbReference>
<dbReference type="Pfam" id="PF13237">
    <property type="entry name" value="Fer4_10"/>
    <property type="match status" value="1"/>
</dbReference>
<dbReference type="SUPFAM" id="SSF54862">
    <property type="entry name" value="4Fe-4S ferredoxins"/>
    <property type="match status" value="1"/>
</dbReference>
<dbReference type="PROSITE" id="PS00198">
    <property type="entry name" value="4FE4S_FER_1"/>
    <property type="match status" value="2"/>
</dbReference>
<dbReference type="PROSITE" id="PS51379">
    <property type="entry name" value="4FE4S_FER_2"/>
    <property type="match status" value="2"/>
</dbReference>